<organism>
    <name type="scientific">Influenza C virus (strain C/Nara/1982)</name>
    <dbReference type="NCBI Taxonomy" id="203232"/>
    <lineage>
        <taxon>Viruses</taxon>
        <taxon>Riboviria</taxon>
        <taxon>Orthornavirae</taxon>
        <taxon>Negarnaviricota</taxon>
        <taxon>Polyploviricotina</taxon>
        <taxon>Insthoviricetes</taxon>
        <taxon>Articulavirales</taxon>
        <taxon>Orthomyxoviridae</taxon>
        <taxon>Gammainfluenzavirus</taxon>
        <taxon>Gammainfluenzavirus influenzae</taxon>
        <taxon>Influenza C virus</taxon>
    </lineage>
</organism>
<keyword id="KW-1015">Disulfide bond</keyword>
<keyword id="KW-1170">Fusion of virus membrane with host endosomal membrane</keyword>
<keyword id="KW-1168">Fusion of virus membrane with host membrane</keyword>
<keyword id="KW-0325">Glycoprotein</keyword>
<keyword id="KW-0348">Hemagglutinin</keyword>
<keyword id="KW-1032">Host cell membrane</keyword>
<keyword id="KW-1043">Host membrane</keyword>
<keyword id="KW-0945">Host-virus interaction</keyword>
<keyword id="KW-0378">Hydrolase</keyword>
<keyword id="KW-0472">Membrane</keyword>
<keyword id="KW-0812">Transmembrane</keyword>
<keyword id="KW-1133">Transmembrane helix</keyword>
<keyword id="KW-1161">Viral attachment to host cell</keyword>
<keyword id="KW-0261">Viral envelope protein</keyword>
<keyword id="KW-1162">Viral penetration into host cytoplasm</keyword>
<keyword id="KW-0946">Virion</keyword>
<keyword id="KW-1160">Virus entry into host cell</keyword>
<proteinExistence type="inferred from homology"/>
<dbReference type="EC" id="3.1.1.53"/>
<dbReference type="EMBL" id="M25362">
    <property type="protein sequence ID" value="AAA43790.1"/>
    <property type="molecule type" value="Genomic_RNA"/>
</dbReference>
<dbReference type="PIR" id="B32665">
    <property type="entry name" value="HMIVEB"/>
</dbReference>
<dbReference type="GlyCosmos" id="P17005">
    <property type="glycosylation" value="4 sites, No reported glycans"/>
</dbReference>
<dbReference type="GO" id="GO:0020002">
    <property type="term" value="C:host cell plasma membrane"/>
    <property type="evidence" value="ECO:0007669"/>
    <property type="project" value="UniProtKB-SubCell"/>
</dbReference>
<dbReference type="GO" id="GO:0016020">
    <property type="term" value="C:membrane"/>
    <property type="evidence" value="ECO:0007669"/>
    <property type="project" value="UniProtKB-KW"/>
</dbReference>
<dbReference type="GO" id="GO:0019031">
    <property type="term" value="C:viral envelope"/>
    <property type="evidence" value="ECO:0007669"/>
    <property type="project" value="UniProtKB-KW"/>
</dbReference>
<dbReference type="GO" id="GO:0055036">
    <property type="term" value="C:virion membrane"/>
    <property type="evidence" value="ECO:0007669"/>
    <property type="project" value="UniProtKB-SubCell"/>
</dbReference>
<dbReference type="GO" id="GO:0046789">
    <property type="term" value="F:host cell surface receptor binding"/>
    <property type="evidence" value="ECO:0007669"/>
    <property type="project" value="InterPro"/>
</dbReference>
<dbReference type="GO" id="GO:0106331">
    <property type="term" value="F:sialate 4-O-acetylesterase activity"/>
    <property type="evidence" value="ECO:0007669"/>
    <property type="project" value="RHEA"/>
</dbReference>
<dbReference type="GO" id="GO:0106330">
    <property type="term" value="F:sialate 9-O-acetylesterase activity"/>
    <property type="evidence" value="ECO:0007669"/>
    <property type="project" value="RHEA"/>
</dbReference>
<dbReference type="GO" id="GO:0039654">
    <property type="term" value="P:fusion of virus membrane with host endosome membrane"/>
    <property type="evidence" value="ECO:0007669"/>
    <property type="project" value="UniProtKB-KW"/>
</dbReference>
<dbReference type="GO" id="GO:0019064">
    <property type="term" value="P:fusion of virus membrane with host plasma membrane"/>
    <property type="evidence" value="ECO:0007669"/>
    <property type="project" value="InterPro"/>
</dbReference>
<dbReference type="GO" id="GO:0046718">
    <property type="term" value="P:symbiont entry into host cell"/>
    <property type="evidence" value="ECO:0007669"/>
    <property type="project" value="UniProtKB-KW"/>
</dbReference>
<dbReference type="GO" id="GO:0019062">
    <property type="term" value="P:virion attachment to host cell"/>
    <property type="evidence" value="ECO:0007669"/>
    <property type="project" value="UniProtKB-KW"/>
</dbReference>
<dbReference type="Gene3D" id="2.20.70.20">
    <property type="match status" value="2"/>
</dbReference>
<dbReference type="Gene3D" id="3.90.20.10">
    <property type="match status" value="1"/>
</dbReference>
<dbReference type="InterPro" id="IPR008980">
    <property type="entry name" value="Capsid_hemagglutn"/>
</dbReference>
<dbReference type="InterPro" id="IPR007142">
    <property type="entry name" value="Hemagglutn-estrase_core"/>
</dbReference>
<dbReference type="InterPro" id="IPR003860">
    <property type="entry name" value="Hemagglutn-estrase_hemagglutn"/>
</dbReference>
<dbReference type="InterPro" id="IPR014831">
    <property type="entry name" value="Hemagglutn_stalk_influenz-C"/>
</dbReference>
<dbReference type="Pfam" id="PF03996">
    <property type="entry name" value="Hema_esterase"/>
    <property type="match status" value="1"/>
</dbReference>
<dbReference type="Pfam" id="PF02710">
    <property type="entry name" value="Hema_HEFG"/>
    <property type="match status" value="1"/>
</dbReference>
<dbReference type="Pfam" id="PF08720">
    <property type="entry name" value="Hema_stalk"/>
    <property type="match status" value="1"/>
</dbReference>
<dbReference type="SUPFAM" id="SSF58064">
    <property type="entry name" value="Influenza hemagglutinin (stalk)"/>
    <property type="match status" value="1"/>
</dbReference>
<dbReference type="SUPFAM" id="SSF52266">
    <property type="entry name" value="SGNH hydrolase"/>
    <property type="match status" value="1"/>
</dbReference>
<dbReference type="SUPFAM" id="SSF49818">
    <property type="entry name" value="Viral protein domain"/>
    <property type="match status" value="1"/>
</dbReference>
<organismHost>
    <name type="scientific">Homo sapiens</name>
    <name type="common">Human</name>
    <dbReference type="NCBI Taxonomy" id="9606"/>
</organismHost>
<organismHost>
    <name type="scientific">Sus scrofa</name>
    <name type="common">Pig</name>
    <dbReference type="NCBI Taxonomy" id="9823"/>
</organismHost>
<comment type="function">
    <text evidence="1">Binds to the N-acetyl-9-O-acetylneuraminic acid residues on the cell surface, bringing about the attachment of the virus particle to the cell. Plays a major role in the determination of host range restriction and virulence. Class I viral fusion protein. Responsible for penetration of the virus into the cell cytoplasm by mediating the fusion of the membrane of the endocytosed virus particle with the endosomal membrane. Low pH in endosomes induce an irreversible conformational change in HEF2, releasing the fusion hydrophobic peptide. Several trimers are required to form a competent fusion pore. Displays a receptor-destroying activity which is a neuraminidate-O-acetyl esterase. This activity cleaves off any receptor on the cell surface, which would otherwise prevent virions release. These cleavages prevent self-aggregation and ensure the efficient spread of the progeny virus from cell to cell (By similarity).</text>
</comment>
<comment type="catalytic activity">
    <reaction>
        <text>N-acetyl-9-O-acetylneuraminate + H2O = N-acetylneuraminate + acetate + H(+)</text>
        <dbReference type="Rhea" id="RHEA:22600"/>
        <dbReference type="ChEBI" id="CHEBI:15377"/>
        <dbReference type="ChEBI" id="CHEBI:15378"/>
        <dbReference type="ChEBI" id="CHEBI:28999"/>
        <dbReference type="ChEBI" id="CHEBI:30089"/>
        <dbReference type="ChEBI" id="CHEBI:35418"/>
        <dbReference type="EC" id="3.1.1.53"/>
    </reaction>
</comment>
<comment type="catalytic activity">
    <reaction>
        <text>N-acetyl-4-O-acetylneuraminate + H2O = N-acetylneuraminate + acetate + H(+)</text>
        <dbReference type="Rhea" id="RHEA:25564"/>
        <dbReference type="ChEBI" id="CHEBI:15377"/>
        <dbReference type="ChEBI" id="CHEBI:15378"/>
        <dbReference type="ChEBI" id="CHEBI:29006"/>
        <dbReference type="ChEBI" id="CHEBI:30089"/>
        <dbReference type="ChEBI" id="CHEBI:35418"/>
        <dbReference type="EC" id="3.1.1.53"/>
    </reaction>
</comment>
<comment type="subunit">
    <text evidence="1">Homotrimer of disulfide-linked HEF1-HEF2.</text>
</comment>
<comment type="subcellular location">
    <subcellularLocation>
        <location evidence="3">Virion membrane</location>
        <topology evidence="3">Single-pass type I membrane protein</topology>
    </subcellularLocation>
    <subcellularLocation>
        <location evidence="1">Host cell membrane</location>
        <topology evidence="1">Single-pass type I membrane protein</topology>
    </subcellularLocation>
</comment>
<comment type="PTM">
    <text evidence="1">In natural infection, inactive HEF is matured into HEF1 and HEF2 outside the cell by one or more trypsin-like, arginine-specific endoprotease.</text>
</comment>
<comment type="similarity">
    <text evidence="3">Belongs to the influenza type C/coronaviruses hemagglutinin-esterase family.</text>
</comment>
<evidence type="ECO:0000250" key="1"/>
<evidence type="ECO:0000255" key="2"/>
<evidence type="ECO:0000305" key="3"/>
<feature type="chain" id="PRO_0000039158" description="Hemagglutinin-esterase-fusion glycoprotein chain 1">
    <location>
        <begin position="1"/>
        <end position="432"/>
    </location>
</feature>
<feature type="chain" id="PRO_0000039159" description="Hemagglutinin-esterase-fusion glycoprotein chain 2">
    <location>
        <begin position="433"/>
        <end position="641"/>
    </location>
</feature>
<feature type="topological domain" description="Extracellular" evidence="2">
    <location>
        <begin position="1"/>
        <end position="616"/>
    </location>
</feature>
<feature type="transmembrane region" description="Helical" evidence="2">
    <location>
        <begin position="617"/>
        <end position="637"/>
    </location>
</feature>
<feature type="topological domain" description="Cytoplasmic" evidence="2">
    <location>
        <begin position="638"/>
        <end position="641"/>
    </location>
</feature>
<feature type="region of interest" description="Fusion domain-1" evidence="1">
    <location>
        <begin position="1"/>
        <end position="26"/>
    </location>
</feature>
<feature type="region of interest" description="Esterase domain-1" evidence="1">
    <location>
        <begin position="27"/>
        <end position="137"/>
    </location>
</feature>
<feature type="region of interest" description="N-acetyl-9-O-acetylneuraminic acid binding" evidence="1">
    <location>
        <begin position="137"/>
        <end position="296"/>
    </location>
</feature>
<feature type="region of interest" description="Esterase domain-2" evidence="1">
    <location>
        <begin position="297"/>
        <end position="351"/>
    </location>
</feature>
<feature type="region of interest" description="Fusion domain-2" evidence="1">
    <location>
        <begin position="352"/>
        <end position="637"/>
    </location>
</feature>
<feature type="active site" description="Nucleophile" evidence="1">
    <location>
        <position position="57"/>
    </location>
</feature>
<feature type="active site" description="Charge relay system" evidence="1">
    <location>
        <position position="352"/>
    </location>
</feature>
<feature type="active site" description="Charge relay system" evidence="1">
    <location>
        <position position="355"/>
    </location>
</feature>
<feature type="glycosylation site" description="N-linked (GlcNAc...) asparagine; by host" evidence="2">
    <location>
        <position position="12"/>
    </location>
</feature>
<feature type="glycosylation site" description="N-linked (GlcNAc...) asparagine; by host" evidence="2">
    <location>
        <position position="47"/>
    </location>
</feature>
<feature type="glycosylation site" description="N-linked (GlcNAc...) asparagine; by host" evidence="2">
    <location>
        <position position="130"/>
    </location>
</feature>
<feature type="glycosylation site" description="N-linked (GlcNAc...) asparagine; by host" evidence="2">
    <location>
        <position position="381"/>
    </location>
</feature>
<feature type="disulfide bond" description="Interchain (between HEF1 and HEF2 chains)" evidence="1">
    <location>
        <begin position="6"/>
        <end position="569"/>
    </location>
</feature>
<feature type="disulfide bond" evidence="1">
    <location>
        <begin position="106"/>
        <end position="151"/>
    </location>
</feature>
<feature type="disulfide bond" evidence="1">
    <location>
        <begin position="126"/>
        <end position="174"/>
    </location>
</feature>
<feature type="disulfide bond" evidence="1">
    <location>
        <begin position="196"/>
        <end position="238"/>
    </location>
</feature>
<feature type="disulfide bond" evidence="1">
    <location>
        <begin position="215"/>
        <end position="302"/>
    </location>
</feature>
<feature type="disulfide bond" evidence="1">
    <location>
        <begin position="223"/>
        <end position="275"/>
    </location>
</feature>
<feature type="disulfide bond" evidence="1">
    <location>
        <begin position="332"/>
        <end position="338"/>
    </location>
</feature>
<feature type="non-terminal residue">
    <location>
        <position position="1"/>
    </location>
</feature>
<accession>P17005</accession>
<gene>
    <name type="primary">HE</name>
</gene>
<reference key="1">
    <citation type="journal article" date="1989" name="Virology">
        <title>Antigenic and genetic characterization of three influenza C strains isolated in the Kinki district of Japan in 1982-1983.</title>
        <authorList>
            <person name="Adachi K."/>
            <person name="Kitame F."/>
            <person name="Sugawara K."/>
            <person name="Nishimura H."/>
            <person name="Nakamura K."/>
        </authorList>
    </citation>
    <scope>NUCLEOTIDE SEQUENCE [GENOMIC RNA]</scope>
</reference>
<sequence length="641" mass="70561">EKIKICLQKQVNSSFSLHNGFGGNLYATEEKRMFELVKPKAGASVLNQSTWIGFGDSRTDKSNPNFPRSADVSVKTANKFRSLTGGSLMLSMFGPPGKVDYLYQGCGKHKVFYEGVNWSPHAAIDCYRKNWTDIKLNFQKNIYELASQSHCMSLVNALDKTIPLQATAGVAGNCNNSFLKNPALYTQEVTPPXXKCGKENLAFFTLPTQFGTYECRLHLVASCYFIYDSKEVYNKRGCDNYFQVIYDSSGKVVGGLDNRVSPYTGNSGDTPTMQCDMIQLKPGRYSVRSSPRFLLMPERSYCFDMKEKGPVTAVQSIWGKDRKSDYAVDQACLSTPGCMLIQKQKPYTGEADDHHGDQEMRELLSGLDYEARCISQSGWVNETSPFTEEYLLPPKFGRCPLAAKEESIPKIPDGLLIPTSGTDTTVTKPKSRIFGIDDLIIGLLFVAIVEAGIGGYLLGSRKESGGGVTKESAEKGFEKIGNDIQILRSSTNIAIEKLNDRISHDEQAIRDLTLEIENARSEALLGELGIIRALLVGNISIGLQESLWELASEITNRAGDLAVEISPGCWIIDNNICDQSCQNFIFKFNETAPVPTIPPLDTKIDLQSDPFYWGSSLGLAITAAISLAALVISGIAICRTK</sequence>
<protein>
    <recommendedName>
        <fullName>Hemagglutinin-esterase-fusion glycoprotein</fullName>
        <shortName>HEF</shortName>
        <ecNumber>3.1.1.53</ecNumber>
    </recommendedName>
    <component>
        <recommendedName>
            <fullName>Hemagglutinin-esterase-fusion glycoprotein chain 1</fullName>
            <shortName>HEF1</shortName>
        </recommendedName>
    </component>
    <component>
        <recommendedName>
            <fullName>Hemagglutinin-esterase-fusion glycoprotein chain 2</fullName>
            <shortName>HEF2</shortName>
        </recommendedName>
    </component>
</protein>
<name>HEMA_INCNA</name>